<accession>Q5AJD2</accession>
<accession>A0A1D8PJC3</accession>
<protein>
    <recommendedName>
        <fullName evidence="1">Dolichyl pyrophosphate Glc1Man9GlcNAc2 alpha-1,3-glucosyltransferase</fullName>
        <ecNumber evidence="1">2.4.1.265</ecNumber>
    </recommendedName>
    <alternativeName>
        <fullName>Asparagine-linked glycosylation protein 8</fullName>
    </alternativeName>
    <alternativeName>
        <fullName>Dol-P-Glc:Glc(1)Man(9)GlcNAc(2)-PP-dolichyl alpha-1,3-glucosyltransferase</fullName>
    </alternativeName>
    <alternativeName>
        <fullName>Dolichyl-P-Glc:Glc1Man9GlcNAc2-PP-dolichyl glucosyltransferase</fullName>
    </alternativeName>
</protein>
<sequence>MAKKKSTGPQPSLSSSPNGRAKVTAETITTTTTTTTDTTNSYSLLNIWVISLALKILLFIGYHSTDFDVHRNWLAITNKLPISQWYIENTSQWTLDYPPFFAYFEYLLSLLVPRFVANDGCLDIVEIGQYGLPTIYFQRLTVIISELVLFYALQTIVKTSPTLSAKRRMYVATASLALSPGLILIDHIHFQYNGMMYGILLLCINSARLQQYLSCGFWFSVLLCFKHIYLYLAPAVFIFLLRGYCLKFYWNKRKNFFINIFNFIQWINLFKLGSIVILVFIIAFGPFYNVLPQLISRLFPFSRGLTHAYWAPNIWAVYSFLDRILIQIYKKIPMSKYPLLKIFQFDPNSLNNDQLLKTSTRGIVGDIEFFILPNITPKLTFLLTLFYQIMALIPLFIQPTYRRFVGALTLCGYASFLFGWHVHEKAILLVIFPMTLLVARDQKLLTPFNLLVSCGYGSLFPLIFTCNEWLIKVVYTYTWYIIFYFNFRKVVRPSKNNIIGNGIGNGNGKGGGIILDRMVNLYILLFNVVVIITSLFDLFKHKYPVLQNFEFLNLMIYSVYCAIGIISSWNGFCWLYFIDDGIWNQDQ</sequence>
<organism>
    <name type="scientific">Candida albicans (strain SC5314 / ATCC MYA-2876)</name>
    <name type="common">Yeast</name>
    <dbReference type="NCBI Taxonomy" id="237561"/>
    <lineage>
        <taxon>Eukaryota</taxon>
        <taxon>Fungi</taxon>
        <taxon>Dikarya</taxon>
        <taxon>Ascomycota</taxon>
        <taxon>Saccharomycotina</taxon>
        <taxon>Pichiomycetes</taxon>
        <taxon>Debaryomycetaceae</taxon>
        <taxon>Candida/Lodderomyces clade</taxon>
        <taxon>Candida</taxon>
    </lineage>
</organism>
<dbReference type="EC" id="2.4.1.265" evidence="1"/>
<dbReference type="EMBL" id="CP017625">
    <property type="protein sequence ID" value="AOW28227.1"/>
    <property type="molecule type" value="Genomic_DNA"/>
</dbReference>
<dbReference type="RefSeq" id="XP_721736.2">
    <property type="nucleotide sequence ID" value="XM_716643.2"/>
</dbReference>
<dbReference type="SMR" id="Q5AJD2"/>
<dbReference type="FunCoup" id="Q5AJD2">
    <property type="interactions" value="819"/>
</dbReference>
<dbReference type="STRING" id="237561.Q5AJD2"/>
<dbReference type="EnsemblFungi" id="C3_01880W_A-T">
    <property type="protein sequence ID" value="C3_01880W_A-T-p1"/>
    <property type="gene ID" value="C3_01880W_A"/>
</dbReference>
<dbReference type="GeneID" id="3636562"/>
<dbReference type="KEGG" id="cal:CAALFM_C301880WA"/>
<dbReference type="CGD" id="CAL0000180957">
    <property type="gene designation" value="ALG8"/>
</dbReference>
<dbReference type="VEuPathDB" id="FungiDB:C3_01880W_A"/>
<dbReference type="eggNOG" id="KOG2576">
    <property type="taxonomic scope" value="Eukaryota"/>
</dbReference>
<dbReference type="HOGENOM" id="CLU_022045_1_1_1"/>
<dbReference type="InParanoid" id="Q5AJD2"/>
<dbReference type="OrthoDB" id="1689333at2759"/>
<dbReference type="UniPathway" id="UPA00378"/>
<dbReference type="PRO" id="PR:Q5AJD2"/>
<dbReference type="Proteomes" id="UP000000559">
    <property type="component" value="Chromosome 3"/>
</dbReference>
<dbReference type="GO" id="GO:0005789">
    <property type="term" value="C:endoplasmic reticulum membrane"/>
    <property type="evidence" value="ECO:0000250"/>
    <property type="project" value="UniProtKB"/>
</dbReference>
<dbReference type="GO" id="GO:0042283">
    <property type="term" value="F:dolichyl pyrophosphate Glc1Man9GlcNAc2 alpha-1,3-glucosyltransferase activity"/>
    <property type="evidence" value="ECO:0000250"/>
    <property type="project" value="UniProtKB"/>
</dbReference>
<dbReference type="GO" id="GO:0006488">
    <property type="term" value="P:dolichol-linked oligosaccharide biosynthetic process"/>
    <property type="evidence" value="ECO:0000250"/>
    <property type="project" value="UniProtKB"/>
</dbReference>
<dbReference type="GO" id="GO:0006487">
    <property type="term" value="P:protein N-linked glycosylation"/>
    <property type="evidence" value="ECO:0000250"/>
    <property type="project" value="UniProtKB"/>
</dbReference>
<dbReference type="InterPro" id="IPR004856">
    <property type="entry name" value="Glyco_trans_ALG6/ALG8"/>
</dbReference>
<dbReference type="PANTHER" id="PTHR12413">
    <property type="entry name" value="DOLICHYL GLYCOSYLTRANSFERASE"/>
    <property type="match status" value="1"/>
</dbReference>
<dbReference type="PANTHER" id="PTHR12413:SF2">
    <property type="entry name" value="DOLICHYL PYROPHOSPHATE GLC1MAN9GLCNAC2 ALPHA-1,3-GLUCOSYLTRANSFERASE-RELATED"/>
    <property type="match status" value="1"/>
</dbReference>
<dbReference type="Pfam" id="PF03155">
    <property type="entry name" value="Alg6_Alg8"/>
    <property type="match status" value="1"/>
</dbReference>
<reference key="1">
    <citation type="journal article" date="2004" name="Proc. Natl. Acad. Sci. U.S.A.">
        <title>The diploid genome sequence of Candida albicans.</title>
        <authorList>
            <person name="Jones T."/>
            <person name="Federspiel N.A."/>
            <person name="Chibana H."/>
            <person name="Dungan J."/>
            <person name="Kalman S."/>
            <person name="Magee B.B."/>
            <person name="Newport G."/>
            <person name="Thorstenson Y.R."/>
            <person name="Agabian N."/>
            <person name="Magee P.T."/>
            <person name="Davis R.W."/>
            <person name="Scherer S."/>
        </authorList>
    </citation>
    <scope>NUCLEOTIDE SEQUENCE [LARGE SCALE GENOMIC DNA]</scope>
    <source>
        <strain>SC5314 / ATCC MYA-2876</strain>
    </source>
</reference>
<reference key="2">
    <citation type="journal article" date="2007" name="Genome Biol.">
        <title>Assembly of the Candida albicans genome into sixteen supercontigs aligned on the eight chromosomes.</title>
        <authorList>
            <person name="van het Hoog M."/>
            <person name="Rast T.J."/>
            <person name="Martchenko M."/>
            <person name="Grindle S."/>
            <person name="Dignard D."/>
            <person name="Hogues H."/>
            <person name="Cuomo C."/>
            <person name="Berriman M."/>
            <person name="Scherer S."/>
            <person name="Magee B.B."/>
            <person name="Whiteway M."/>
            <person name="Chibana H."/>
            <person name="Nantel A."/>
            <person name="Magee P.T."/>
        </authorList>
    </citation>
    <scope>GENOME REANNOTATION</scope>
    <source>
        <strain>SC5314 / ATCC MYA-2876</strain>
    </source>
</reference>
<reference key="3">
    <citation type="journal article" date="2013" name="Genome Biol.">
        <title>Assembly of a phased diploid Candida albicans genome facilitates allele-specific measurements and provides a simple model for repeat and indel structure.</title>
        <authorList>
            <person name="Muzzey D."/>
            <person name="Schwartz K."/>
            <person name="Weissman J.S."/>
            <person name="Sherlock G."/>
        </authorList>
    </citation>
    <scope>NUCLEOTIDE SEQUENCE [LARGE SCALE GENOMIC DNA]</scope>
    <scope>GENOME REANNOTATION</scope>
    <source>
        <strain>SC5314 / ATCC MYA-2876</strain>
    </source>
</reference>
<gene>
    <name type="primary">ALG8</name>
    <name type="ordered locus">CAALFM_C301880WA</name>
    <name type="ORF">CaO19.1659</name>
    <name type="ORF">CaO19.9228</name>
</gene>
<proteinExistence type="inferred from homology"/>
<keyword id="KW-0256">Endoplasmic reticulum</keyword>
<keyword id="KW-0328">Glycosyltransferase</keyword>
<keyword id="KW-0472">Membrane</keyword>
<keyword id="KW-1185">Reference proteome</keyword>
<keyword id="KW-0808">Transferase</keyword>
<keyword id="KW-0812">Transmembrane</keyword>
<keyword id="KW-1133">Transmembrane helix</keyword>
<evidence type="ECO:0000250" key="1">
    <source>
        <dbReference type="UniProtKB" id="P40351"/>
    </source>
</evidence>
<evidence type="ECO:0000255" key="2"/>
<evidence type="ECO:0000256" key="3">
    <source>
        <dbReference type="SAM" id="MobiDB-lite"/>
    </source>
</evidence>
<evidence type="ECO:0000305" key="4"/>
<name>ALG8_CANAL</name>
<feature type="chain" id="PRO_0000278328" description="Dolichyl pyrophosphate Glc1Man9GlcNAc2 alpha-1,3-glucosyltransferase">
    <location>
        <begin position="1"/>
        <end position="587"/>
    </location>
</feature>
<feature type="topological domain" description="Lumenal" evidence="2">
    <location>
        <begin position="1"/>
        <end position="41"/>
    </location>
</feature>
<feature type="transmembrane region" description="Helical" evidence="2">
    <location>
        <begin position="42"/>
        <end position="62"/>
    </location>
</feature>
<feature type="topological domain" description="Cytoplasmic" evidence="2">
    <location>
        <begin position="63"/>
        <end position="139"/>
    </location>
</feature>
<feature type="transmembrane region" description="Helical" evidence="2">
    <location>
        <begin position="140"/>
        <end position="160"/>
    </location>
</feature>
<feature type="topological domain" description="Lumenal" evidence="2">
    <location>
        <begin position="161"/>
        <end position="169"/>
    </location>
</feature>
<feature type="transmembrane region" description="Helical" evidence="2">
    <location>
        <begin position="170"/>
        <end position="192"/>
    </location>
</feature>
<feature type="topological domain" description="Cytoplasmic" evidence="2">
    <location>
        <begin position="193"/>
        <end position="220"/>
    </location>
</feature>
<feature type="transmembrane region" description="Helical" evidence="2">
    <location>
        <begin position="221"/>
        <end position="241"/>
    </location>
</feature>
<feature type="topological domain" description="Lumenal" evidence="2">
    <location>
        <begin position="242"/>
        <end position="274"/>
    </location>
</feature>
<feature type="transmembrane region" description="Helical" evidence="2">
    <location>
        <begin position="275"/>
        <end position="295"/>
    </location>
</feature>
<feature type="topological domain" description="Cytoplasmic" evidence="2">
    <location>
        <begin position="296"/>
        <end position="298"/>
    </location>
</feature>
<feature type="transmembrane region" description="Helical" evidence="2">
    <location>
        <begin position="299"/>
        <end position="321"/>
    </location>
</feature>
<feature type="topological domain" description="Lumenal" evidence="2">
    <location>
        <begin position="322"/>
        <end position="378"/>
    </location>
</feature>
<feature type="transmembrane region" description="Helical" evidence="2">
    <location>
        <begin position="379"/>
        <end position="399"/>
    </location>
</feature>
<feature type="topological domain" description="Cytoplasmic" evidence="2">
    <location>
        <begin position="400"/>
        <end position="415"/>
    </location>
</feature>
<feature type="transmembrane region" description="Helical" evidence="2">
    <location>
        <begin position="416"/>
        <end position="436"/>
    </location>
</feature>
<feature type="topological domain" description="Lumenal" evidence="2">
    <location>
        <begin position="437"/>
        <end position="443"/>
    </location>
</feature>
<feature type="transmembrane region" description="Helical" evidence="2">
    <location>
        <begin position="444"/>
        <end position="464"/>
    </location>
</feature>
<feature type="topological domain" description="Cytoplasmic" evidence="2">
    <location>
        <begin position="465"/>
        <end position="466"/>
    </location>
</feature>
<feature type="transmembrane region" description="Helical" evidence="2">
    <location>
        <begin position="467"/>
        <end position="487"/>
    </location>
</feature>
<feature type="topological domain" description="Lumenal" evidence="2">
    <location>
        <begin position="488"/>
        <end position="518"/>
    </location>
</feature>
<feature type="transmembrane region" description="Helical" evidence="2">
    <location>
        <begin position="519"/>
        <end position="539"/>
    </location>
</feature>
<feature type="topological domain" description="Cytoplasmic" evidence="2">
    <location>
        <begin position="540"/>
        <end position="557"/>
    </location>
</feature>
<feature type="transmembrane region" description="Helical" evidence="2">
    <location>
        <begin position="558"/>
        <end position="578"/>
    </location>
</feature>
<feature type="topological domain" description="Lumenal" evidence="2">
    <location>
        <begin position="579"/>
        <end position="587"/>
    </location>
</feature>
<feature type="region of interest" description="Disordered" evidence="3">
    <location>
        <begin position="1"/>
        <end position="30"/>
    </location>
</feature>
<feature type="compositionally biased region" description="Polar residues" evidence="3">
    <location>
        <begin position="7"/>
        <end position="18"/>
    </location>
</feature>
<comment type="function">
    <text evidence="1">Dolichyl pyrophosphate Glc1Man9GlcNAc2 alpha-1,3-glucosyltransferase that operates in the biosynthetic pathway of dolichol-linked oligosaccharides, the glycan precursors employed in protein asparagine (N)-glycosylation. The assembly of dolichol-linked oligosaccharides begins on the cytosolic side of the endoplasmic reticulum membrane and finishes in its lumen. The sequential addition of sugars to dolichol pyrophosphate produces dolichol-linked oligosaccharides containing fourteen sugars, including two GlcNAcs, nine mannoses and three glucoses. Once assembled, the oligosaccharide is transferred from the lipid to nascent proteins by oligosaccharyltransferases. In the lumen of the endoplasmic reticulum, adds the second glucose residue from dolichyl phosphate glucose (Dol-P-Glc) onto the lipid-linked oligosaccharide intermediate Glc(1)Man(9)GlcNAc(2)-PP-Dol to produce Glc(2)Man(9)GlcNAc(2)-PP-Dol.</text>
</comment>
<comment type="catalytic activity">
    <reaction evidence="1">
        <text>an alpha-D-Glc-(1-&gt;3)-alpha-D-Man-(1-&gt;2)-alpha-D-Man-(1-&gt;2)-alpha-D-Man-(1-&gt;3)-[alpha-D-Man-(1-&gt;2)-alpha-D-Man-(1-&gt;3)-[alpha-D-Man-(1-&gt;2)-alpha-D-Man-(1-&gt;6)]-alpha-D-Man-(1-&gt;6)]-beta-D-Man-(1-&gt;4)-beta-D-GlcNAc-(1-&gt;4)-alpha-D-GlcNAc-diphospho-di-trans,poly-cis-dolichol + a di-trans,poly-cis-dolichyl beta-D-glucosyl phosphate = an alpha-D-Glc-(1-&gt;3)-alpha-D-Glc-(1-&gt;3)-alpha-D-Man-(1-&gt;2)-alpha-D-Man-(1-&gt;2)-alpha-D-Man-(1-&gt;3)-[alpha-D-Man-(1-&gt;2)-alpha-D-Man-(1-&gt;3)-[alpha-D-Man-(1-&gt;2)-alpha-D-Man-(1-&gt;6)]-alpha-D-Man-(1-&gt;6)]-beta-D-Man-(1-&gt;4)-beta-D-GlcNAc-(1-&gt;4)-alpha-D-GlcNAc-diphospho-di-trans,poly-cis-dolichol + a di-trans,poly-cis-dolichyl phosphate + H(+)</text>
        <dbReference type="Rhea" id="RHEA:31307"/>
        <dbReference type="Rhea" id="RHEA-COMP:19498"/>
        <dbReference type="Rhea" id="RHEA-COMP:19502"/>
        <dbReference type="Rhea" id="RHEA-COMP:19521"/>
        <dbReference type="Rhea" id="RHEA-COMP:19522"/>
        <dbReference type="ChEBI" id="CHEBI:15378"/>
        <dbReference type="ChEBI" id="CHEBI:57525"/>
        <dbReference type="ChEBI" id="CHEBI:57683"/>
        <dbReference type="ChEBI" id="CHEBI:132521"/>
        <dbReference type="ChEBI" id="CHEBI:132522"/>
        <dbReference type="EC" id="2.4.1.265"/>
    </reaction>
    <physiologicalReaction direction="left-to-right" evidence="1">
        <dbReference type="Rhea" id="RHEA:31308"/>
    </physiologicalReaction>
</comment>
<comment type="pathway">
    <text evidence="1">Protein modification; protein glycosylation.</text>
</comment>
<comment type="subcellular location">
    <subcellularLocation>
        <location evidence="1">Endoplasmic reticulum membrane</location>
        <topology evidence="2">Multi-pass membrane protein</topology>
    </subcellularLocation>
</comment>
<comment type="similarity">
    <text evidence="4">Belongs to the ALG6/ALG8 glucosyltransferase family.</text>
</comment>